<dbReference type="EMBL" id="AE017282">
    <property type="protein sequence ID" value="AAU91488.1"/>
    <property type="molecule type" value="Genomic_DNA"/>
</dbReference>
<dbReference type="RefSeq" id="WP_010961581.1">
    <property type="nucleotide sequence ID" value="NC_002977.6"/>
</dbReference>
<dbReference type="SMR" id="Q605D1"/>
<dbReference type="STRING" id="243233.MCA2353"/>
<dbReference type="GeneID" id="88224556"/>
<dbReference type="KEGG" id="mca:MCA2353"/>
<dbReference type="eggNOG" id="COG0200">
    <property type="taxonomic scope" value="Bacteria"/>
</dbReference>
<dbReference type="HOGENOM" id="CLU_055188_4_2_6"/>
<dbReference type="Proteomes" id="UP000006821">
    <property type="component" value="Chromosome"/>
</dbReference>
<dbReference type="GO" id="GO:0022625">
    <property type="term" value="C:cytosolic large ribosomal subunit"/>
    <property type="evidence" value="ECO:0007669"/>
    <property type="project" value="TreeGrafter"/>
</dbReference>
<dbReference type="GO" id="GO:0019843">
    <property type="term" value="F:rRNA binding"/>
    <property type="evidence" value="ECO:0007669"/>
    <property type="project" value="UniProtKB-UniRule"/>
</dbReference>
<dbReference type="GO" id="GO:0003735">
    <property type="term" value="F:structural constituent of ribosome"/>
    <property type="evidence" value="ECO:0007669"/>
    <property type="project" value="InterPro"/>
</dbReference>
<dbReference type="GO" id="GO:0006412">
    <property type="term" value="P:translation"/>
    <property type="evidence" value="ECO:0007669"/>
    <property type="project" value="UniProtKB-UniRule"/>
</dbReference>
<dbReference type="Gene3D" id="3.100.10.10">
    <property type="match status" value="1"/>
</dbReference>
<dbReference type="HAMAP" id="MF_01341">
    <property type="entry name" value="Ribosomal_uL15"/>
    <property type="match status" value="1"/>
</dbReference>
<dbReference type="InterPro" id="IPR030878">
    <property type="entry name" value="Ribosomal_uL15"/>
</dbReference>
<dbReference type="InterPro" id="IPR021131">
    <property type="entry name" value="Ribosomal_uL15/eL18"/>
</dbReference>
<dbReference type="InterPro" id="IPR036227">
    <property type="entry name" value="Ribosomal_uL15/eL18_sf"/>
</dbReference>
<dbReference type="InterPro" id="IPR005749">
    <property type="entry name" value="Ribosomal_uL15_bac-type"/>
</dbReference>
<dbReference type="InterPro" id="IPR001196">
    <property type="entry name" value="Ribosomal_uL15_CS"/>
</dbReference>
<dbReference type="NCBIfam" id="TIGR01071">
    <property type="entry name" value="rplO_bact"/>
    <property type="match status" value="1"/>
</dbReference>
<dbReference type="PANTHER" id="PTHR12934">
    <property type="entry name" value="50S RIBOSOMAL PROTEIN L15"/>
    <property type="match status" value="1"/>
</dbReference>
<dbReference type="PANTHER" id="PTHR12934:SF11">
    <property type="entry name" value="LARGE RIBOSOMAL SUBUNIT PROTEIN UL15M"/>
    <property type="match status" value="1"/>
</dbReference>
<dbReference type="Pfam" id="PF00828">
    <property type="entry name" value="Ribosomal_L27A"/>
    <property type="match status" value="1"/>
</dbReference>
<dbReference type="SUPFAM" id="SSF52080">
    <property type="entry name" value="Ribosomal proteins L15p and L18e"/>
    <property type="match status" value="1"/>
</dbReference>
<dbReference type="PROSITE" id="PS00475">
    <property type="entry name" value="RIBOSOMAL_L15"/>
    <property type="match status" value="1"/>
</dbReference>
<feature type="chain" id="PRO_0000104750" description="Large ribosomal subunit protein uL15">
    <location>
        <begin position="1"/>
        <end position="144"/>
    </location>
</feature>
<feature type="region of interest" description="Disordered" evidence="2">
    <location>
        <begin position="1"/>
        <end position="25"/>
    </location>
</feature>
<organism>
    <name type="scientific">Methylococcus capsulatus (strain ATCC 33009 / NCIMB 11132 / Bath)</name>
    <dbReference type="NCBI Taxonomy" id="243233"/>
    <lineage>
        <taxon>Bacteria</taxon>
        <taxon>Pseudomonadati</taxon>
        <taxon>Pseudomonadota</taxon>
        <taxon>Gammaproteobacteria</taxon>
        <taxon>Methylococcales</taxon>
        <taxon>Methylococcaceae</taxon>
        <taxon>Methylococcus</taxon>
    </lineage>
</organism>
<comment type="function">
    <text evidence="1">Binds to the 23S rRNA.</text>
</comment>
<comment type="subunit">
    <text evidence="1">Part of the 50S ribosomal subunit.</text>
</comment>
<comment type="similarity">
    <text evidence="1">Belongs to the universal ribosomal protein uL15 family.</text>
</comment>
<protein>
    <recommendedName>
        <fullName evidence="1">Large ribosomal subunit protein uL15</fullName>
    </recommendedName>
    <alternativeName>
        <fullName evidence="3">50S ribosomal protein L15</fullName>
    </alternativeName>
</protein>
<sequence length="144" mass="14846">MFLNTIGARDGSRPEKKRVGRGIGSTLGKTCGRGHKGQKARAGGFHKVGFEGGQMPLQRRLPKVGFRSAKKRFVAEVTLTQISKVGGGVIGLAELKEAGLVPTEAKRVKIIATGSVGGVVTVRGVGVTRGARAAIEAAGGKVES</sequence>
<name>RL15_METCA</name>
<gene>
    <name evidence="1" type="primary">rplO</name>
    <name type="ordered locus">MCA2353</name>
</gene>
<keyword id="KW-1185">Reference proteome</keyword>
<keyword id="KW-0687">Ribonucleoprotein</keyword>
<keyword id="KW-0689">Ribosomal protein</keyword>
<keyword id="KW-0694">RNA-binding</keyword>
<keyword id="KW-0699">rRNA-binding</keyword>
<accession>Q605D1</accession>
<proteinExistence type="inferred from homology"/>
<evidence type="ECO:0000255" key="1">
    <source>
        <dbReference type="HAMAP-Rule" id="MF_01341"/>
    </source>
</evidence>
<evidence type="ECO:0000256" key="2">
    <source>
        <dbReference type="SAM" id="MobiDB-lite"/>
    </source>
</evidence>
<evidence type="ECO:0000305" key="3"/>
<reference key="1">
    <citation type="journal article" date="2004" name="PLoS Biol.">
        <title>Genomic insights into methanotrophy: the complete genome sequence of Methylococcus capsulatus (Bath).</title>
        <authorList>
            <person name="Ward N.L."/>
            <person name="Larsen O."/>
            <person name="Sakwa J."/>
            <person name="Bruseth L."/>
            <person name="Khouri H.M."/>
            <person name="Durkin A.S."/>
            <person name="Dimitrov G."/>
            <person name="Jiang L."/>
            <person name="Scanlan D."/>
            <person name="Kang K.H."/>
            <person name="Lewis M.R."/>
            <person name="Nelson K.E."/>
            <person name="Methe B.A."/>
            <person name="Wu M."/>
            <person name="Heidelberg J.F."/>
            <person name="Paulsen I.T."/>
            <person name="Fouts D.E."/>
            <person name="Ravel J."/>
            <person name="Tettelin H."/>
            <person name="Ren Q."/>
            <person name="Read T.D."/>
            <person name="DeBoy R.T."/>
            <person name="Seshadri R."/>
            <person name="Salzberg S.L."/>
            <person name="Jensen H.B."/>
            <person name="Birkeland N.K."/>
            <person name="Nelson W.C."/>
            <person name="Dodson R.J."/>
            <person name="Grindhaug S.H."/>
            <person name="Holt I.E."/>
            <person name="Eidhammer I."/>
            <person name="Jonasen I."/>
            <person name="Vanaken S."/>
            <person name="Utterback T.R."/>
            <person name="Feldblyum T.V."/>
            <person name="Fraser C.M."/>
            <person name="Lillehaug J.R."/>
            <person name="Eisen J.A."/>
        </authorList>
    </citation>
    <scope>NUCLEOTIDE SEQUENCE [LARGE SCALE GENOMIC DNA]</scope>
    <source>
        <strain>ATCC 33009 / NCIMB 11132 / Bath</strain>
    </source>
</reference>